<name>SHO1_YEASV</name>
<reference key="1">
    <citation type="journal article" date="2011" name="PLoS Genet.">
        <title>Whole-genome comparison reveals novel genetic elements that characterize the genome of industrial strains of Saccharomyces cerevisiae.</title>
        <authorList>
            <person name="Borneman A.R."/>
            <person name="Desany B.A."/>
            <person name="Riches D."/>
            <person name="Affourtit J.P."/>
            <person name="Forgan A.H."/>
            <person name="Pretorius I.S."/>
            <person name="Egholm M."/>
            <person name="Chambers P.J."/>
        </authorList>
    </citation>
    <scope>NUCLEOTIDE SEQUENCE [LARGE SCALE GENOMIC DNA]</scope>
    <source>
        <strain>VIN 13</strain>
    </source>
</reference>
<protein>
    <recommendedName>
        <fullName>High osmolarity signaling protein SHO1</fullName>
    </recommendedName>
    <alternativeName>
        <fullName>Osmosensor SHO1</fullName>
    </alternativeName>
    <alternativeName>
        <fullName>Suppressor of SUA8-1 mutation</fullName>
    </alternativeName>
    <alternativeName>
        <fullName>Synthetic high osmolarity-sensitive protein 1</fullName>
    </alternativeName>
</protein>
<feature type="chain" id="PRO_0000410415" description="High osmolarity signaling protein SHO1">
    <location>
        <begin position="1"/>
        <end position="367"/>
    </location>
</feature>
<feature type="topological domain" description="Cytoplasmic" evidence="3">
    <location>
        <begin position="1"/>
        <end position="32"/>
    </location>
</feature>
<feature type="transmembrane region" description="Helical" evidence="3">
    <location>
        <begin position="33"/>
        <end position="53"/>
    </location>
</feature>
<feature type="topological domain" description="Extracellular" evidence="3">
    <location>
        <begin position="54"/>
        <end position="65"/>
    </location>
</feature>
<feature type="transmembrane region" description="Helical" evidence="3">
    <location>
        <begin position="66"/>
        <end position="86"/>
    </location>
</feature>
<feature type="topological domain" description="Cytoplasmic" evidence="3">
    <location>
        <begin position="87"/>
        <end position="93"/>
    </location>
</feature>
<feature type="transmembrane region" description="Helical" evidence="3">
    <location>
        <begin position="94"/>
        <end position="114"/>
    </location>
</feature>
<feature type="topological domain" description="Extracellular" evidence="3">
    <location>
        <begin position="115"/>
        <end position="122"/>
    </location>
</feature>
<feature type="transmembrane region" description="Helical" evidence="3">
    <location>
        <begin position="123"/>
        <end position="143"/>
    </location>
</feature>
<feature type="topological domain" description="Cytoplasmic" evidence="3">
    <location>
        <begin position="144"/>
        <end position="367"/>
    </location>
</feature>
<feature type="domain" description="SH3" evidence="4">
    <location>
        <begin position="300"/>
        <end position="361"/>
    </location>
</feature>
<feature type="region of interest" description="Disordered" evidence="5">
    <location>
        <begin position="252"/>
        <end position="276"/>
    </location>
</feature>
<feature type="compositionally biased region" description="Low complexity" evidence="5">
    <location>
        <begin position="259"/>
        <end position="272"/>
    </location>
</feature>
<feature type="modified residue" description="Phosphoserine" evidence="2">
    <location>
        <position position="166"/>
    </location>
</feature>
<feature type="glycosylation site" description="N-linked (GlcNAc...) asparagine" evidence="3">
    <location>
        <position position="59"/>
    </location>
</feature>
<proteinExistence type="inferred from homology"/>
<gene>
    <name type="primary">SHO1</name>
    <name type="synonym">SSU81</name>
    <name type="ORF">VIN13_1384</name>
</gene>
<keyword id="KW-1003">Cell membrane</keyword>
<keyword id="KW-0966">Cell projection</keyword>
<keyword id="KW-0325">Glycoprotein</keyword>
<keyword id="KW-0472">Membrane</keyword>
<keyword id="KW-0597">Phosphoprotein</keyword>
<keyword id="KW-0728">SH3 domain</keyword>
<keyword id="KW-0346">Stress response</keyword>
<keyword id="KW-0812">Transmembrane</keyword>
<keyword id="KW-1133">Transmembrane helix</keyword>
<accession>E7LTJ6</accession>
<organism>
    <name type="scientific">Saccharomyces cerevisiae (strain VIN 13)</name>
    <name type="common">Baker's yeast</name>
    <dbReference type="NCBI Taxonomy" id="764099"/>
    <lineage>
        <taxon>Eukaryota</taxon>
        <taxon>Fungi</taxon>
        <taxon>Dikarya</taxon>
        <taxon>Ascomycota</taxon>
        <taxon>Saccharomycotina</taxon>
        <taxon>Saccharomycetes</taxon>
        <taxon>Saccharomycetales</taxon>
        <taxon>Saccharomycetaceae</taxon>
        <taxon>Saccharomyces</taxon>
    </lineage>
</organism>
<comment type="function">
    <text evidence="1">Plasma membrane osmosensor that activates the high osmolarity glycerol (HOG) MAPK signaling pathway in response to high osmolarity. Detects changes in external osmolarity and activates PBS2 through the stimulation of STE11 and targets PBS2 to the plasma membrane. PBS2 activation leads to changes in glycerol production that helps to balance the intracellular and external osmotic pressures. Activates also HOG1 in response to heat stress and mediates resistance to oxidative stress. Involved in the regulation of the mating pathway. May be a receptor that feeds into the pseudohyphal growth pathway (By similarity).</text>
</comment>
<comment type="subunit">
    <text evidence="1">Forms homooligomers (By similarity). Interacts (via the SH3 domain) with PBS2. Interacts with FUS1, STE11, STE50 and RNA polymerase II (By similarity).</text>
</comment>
<comment type="subcellular location">
    <subcellularLocation>
        <location evidence="1">Cell membrane</location>
        <topology evidence="1">Multi-pass membrane protein</topology>
    </subcellularLocation>
    <subcellularLocation>
        <location evidence="1">Bud</location>
    </subcellularLocation>
    <subcellularLocation>
        <location evidence="1">Bud neck</location>
    </subcellularLocation>
    <subcellularLocation>
        <location evidence="1">Cell projection</location>
    </subcellularLocation>
    <text evidence="1">Localizes at the tip of the mating projection during conjugation.</text>
</comment>
<comment type="similarity">
    <text evidence="6">Belongs to the SHO1 family.</text>
</comment>
<dbReference type="EMBL" id="ADXC01000028">
    <property type="protein sequence ID" value="EGA79235.1"/>
    <property type="molecule type" value="Genomic_DNA"/>
</dbReference>
<dbReference type="SMR" id="E7LTJ6"/>
<dbReference type="GlyCosmos" id="E7LTJ6">
    <property type="glycosylation" value="1 site, No reported glycans"/>
</dbReference>
<dbReference type="HOGENOM" id="CLU_043316_0_0_1"/>
<dbReference type="OMA" id="KNGKWWQ"/>
<dbReference type="GO" id="GO:0042995">
    <property type="term" value="C:cell projection"/>
    <property type="evidence" value="ECO:0007669"/>
    <property type="project" value="UniProtKB-SubCell"/>
</dbReference>
<dbReference type="GO" id="GO:0005935">
    <property type="term" value="C:cellular bud neck"/>
    <property type="evidence" value="ECO:0007669"/>
    <property type="project" value="UniProtKB-SubCell"/>
</dbReference>
<dbReference type="GO" id="GO:0005886">
    <property type="term" value="C:plasma membrane"/>
    <property type="evidence" value="ECO:0007669"/>
    <property type="project" value="UniProtKB-SubCell"/>
</dbReference>
<dbReference type="GO" id="GO:0030833">
    <property type="term" value="P:regulation of actin filament polymerization"/>
    <property type="evidence" value="ECO:0007669"/>
    <property type="project" value="TreeGrafter"/>
</dbReference>
<dbReference type="CDD" id="cd11855">
    <property type="entry name" value="SH3_Sho1p"/>
    <property type="match status" value="1"/>
</dbReference>
<dbReference type="FunFam" id="2.30.30.40:FF:000213">
    <property type="entry name" value="High osmolarity signaling protein SHO1"/>
    <property type="match status" value="1"/>
</dbReference>
<dbReference type="Gene3D" id="2.30.30.40">
    <property type="entry name" value="SH3 Domains"/>
    <property type="match status" value="1"/>
</dbReference>
<dbReference type="InterPro" id="IPR036028">
    <property type="entry name" value="SH3-like_dom_sf"/>
</dbReference>
<dbReference type="InterPro" id="IPR001452">
    <property type="entry name" value="SH3_domain"/>
</dbReference>
<dbReference type="InterPro" id="IPR035522">
    <property type="entry name" value="Sho1_SH3"/>
</dbReference>
<dbReference type="PANTHER" id="PTHR15735">
    <property type="entry name" value="FCH AND DOUBLE SH3 DOMAINS PROTEIN"/>
    <property type="match status" value="1"/>
</dbReference>
<dbReference type="PANTHER" id="PTHR15735:SF20">
    <property type="entry name" value="HIGH OSMOLARITY SIGNALING PROTEIN SHO1"/>
    <property type="match status" value="1"/>
</dbReference>
<dbReference type="Pfam" id="PF00018">
    <property type="entry name" value="SH3_1"/>
    <property type="match status" value="1"/>
</dbReference>
<dbReference type="PRINTS" id="PR00452">
    <property type="entry name" value="SH3DOMAIN"/>
</dbReference>
<dbReference type="SMART" id="SM00326">
    <property type="entry name" value="SH3"/>
    <property type="match status" value="1"/>
</dbReference>
<dbReference type="SUPFAM" id="SSF50044">
    <property type="entry name" value="SH3-domain"/>
    <property type="match status" value="1"/>
</dbReference>
<dbReference type="PROSITE" id="PS50002">
    <property type="entry name" value="SH3"/>
    <property type="match status" value="1"/>
</dbReference>
<sequence>MSISSKIRPTPRKPSRMATDHSFKMKNFYADPFAISSISLAIVSWVIAIGGSISSASTNESFPRFTWWGIVYQFLIICSLMLFYCFDLVDHYRIFITTSIAVAFVYNTNSATNLVYADGPKKAAASAGVILLSIINLIWILYYGGDNASPTNRWIDSFSIKGIRPSPLENSLHRARRRGNRNTTPYQNNVYNDAIRDSGYATQFDGYPQQQPSHTNYVSSTALAGFENTQPNTSEAVNLHLNTLQQRINSASNAKETNDNSNNQTNTNIGNTFDTDFSNGNTETTMGDTLGLYSDIGDDNFIYKAKALYPYDADDDDAYEISFEQNEILQVSDIEGRWWKARRANGETGIIPSNYVQLIDGPEEMHR</sequence>
<evidence type="ECO:0000250" key="1"/>
<evidence type="ECO:0000250" key="2">
    <source>
        <dbReference type="UniProtKB" id="P40073"/>
    </source>
</evidence>
<evidence type="ECO:0000255" key="3"/>
<evidence type="ECO:0000255" key="4">
    <source>
        <dbReference type="PROSITE-ProRule" id="PRU00192"/>
    </source>
</evidence>
<evidence type="ECO:0000256" key="5">
    <source>
        <dbReference type="SAM" id="MobiDB-lite"/>
    </source>
</evidence>
<evidence type="ECO:0000305" key="6"/>